<comment type="function">
    <text evidence="1">Involved in the binding of tRNA to the ribosomes.</text>
</comment>
<comment type="subunit">
    <text evidence="1">Part of the 30S ribosomal subunit.</text>
</comment>
<comment type="similarity">
    <text evidence="1">Belongs to the universal ribosomal protein uS10 family.</text>
</comment>
<sequence>MSLASRRKVRIRLYGTNPADVEQVAREIVDLAKKMGVQVRGPIPLPTRRLIVTVRRAPSGQGYHTFDHWEMRISKRLIDIEASERVLRRLMTIRVPDTVKIELQLI</sequence>
<dbReference type="EMBL" id="AE009441">
    <property type="protein sequence ID" value="AAL64528.1"/>
    <property type="molecule type" value="Genomic_DNA"/>
</dbReference>
<dbReference type="RefSeq" id="WP_011008996.1">
    <property type="nucleotide sequence ID" value="NC_003364.1"/>
</dbReference>
<dbReference type="SMR" id="Q8ZU80"/>
<dbReference type="FunCoup" id="Q8ZU80">
    <property type="interactions" value="188"/>
</dbReference>
<dbReference type="STRING" id="178306.PAE2907"/>
<dbReference type="EnsemblBacteria" id="AAL64528">
    <property type="protein sequence ID" value="AAL64528"/>
    <property type="gene ID" value="PAE2907"/>
</dbReference>
<dbReference type="GeneID" id="1463690"/>
<dbReference type="KEGG" id="pai:PAE2907"/>
<dbReference type="PATRIC" id="fig|178306.9.peg.2174"/>
<dbReference type="eggNOG" id="arCOG01758">
    <property type="taxonomic scope" value="Archaea"/>
</dbReference>
<dbReference type="HOGENOM" id="CLU_122625_0_1_2"/>
<dbReference type="InParanoid" id="Q8ZU80"/>
<dbReference type="Proteomes" id="UP000002439">
    <property type="component" value="Chromosome"/>
</dbReference>
<dbReference type="GO" id="GO:0022627">
    <property type="term" value="C:cytosolic small ribosomal subunit"/>
    <property type="evidence" value="ECO:0000318"/>
    <property type="project" value="GO_Central"/>
</dbReference>
<dbReference type="GO" id="GO:0003735">
    <property type="term" value="F:structural constituent of ribosome"/>
    <property type="evidence" value="ECO:0000318"/>
    <property type="project" value="GO_Central"/>
</dbReference>
<dbReference type="GO" id="GO:0000049">
    <property type="term" value="F:tRNA binding"/>
    <property type="evidence" value="ECO:0007669"/>
    <property type="project" value="UniProtKB-UniRule"/>
</dbReference>
<dbReference type="GO" id="GO:0006412">
    <property type="term" value="P:translation"/>
    <property type="evidence" value="ECO:0007669"/>
    <property type="project" value="UniProtKB-UniRule"/>
</dbReference>
<dbReference type="FunFam" id="3.30.70.600:FF:000004">
    <property type="entry name" value="30S ribosomal protein S10"/>
    <property type="match status" value="1"/>
</dbReference>
<dbReference type="Gene3D" id="3.30.70.600">
    <property type="entry name" value="Ribosomal protein S10 domain"/>
    <property type="match status" value="1"/>
</dbReference>
<dbReference type="HAMAP" id="MF_00508">
    <property type="entry name" value="Ribosomal_uS10"/>
    <property type="match status" value="1"/>
</dbReference>
<dbReference type="InterPro" id="IPR001848">
    <property type="entry name" value="Ribosomal_uS10"/>
</dbReference>
<dbReference type="InterPro" id="IPR018268">
    <property type="entry name" value="Ribosomal_uS10_CS"/>
</dbReference>
<dbReference type="InterPro" id="IPR027486">
    <property type="entry name" value="Ribosomal_uS10_dom"/>
</dbReference>
<dbReference type="InterPro" id="IPR036838">
    <property type="entry name" value="Ribosomal_uS10_dom_sf"/>
</dbReference>
<dbReference type="InterPro" id="IPR005729">
    <property type="entry name" value="Ribosomal_uS10_euk/arc"/>
</dbReference>
<dbReference type="NCBIfam" id="TIGR01046">
    <property type="entry name" value="uS10_euk_arch"/>
    <property type="match status" value="1"/>
</dbReference>
<dbReference type="PANTHER" id="PTHR11700">
    <property type="entry name" value="30S RIBOSOMAL PROTEIN S10 FAMILY MEMBER"/>
    <property type="match status" value="1"/>
</dbReference>
<dbReference type="Pfam" id="PF00338">
    <property type="entry name" value="Ribosomal_S10"/>
    <property type="match status" value="1"/>
</dbReference>
<dbReference type="PRINTS" id="PR00971">
    <property type="entry name" value="RIBOSOMALS10"/>
</dbReference>
<dbReference type="SMART" id="SM01403">
    <property type="entry name" value="Ribosomal_S10"/>
    <property type="match status" value="1"/>
</dbReference>
<dbReference type="SUPFAM" id="SSF54999">
    <property type="entry name" value="Ribosomal protein S10"/>
    <property type="match status" value="1"/>
</dbReference>
<dbReference type="PROSITE" id="PS00361">
    <property type="entry name" value="RIBOSOMAL_S10"/>
    <property type="match status" value="1"/>
</dbReference>
<reference key="1">
    <citation type="journal article" date="2002" name="Proc. Natl. Acad. Sci. U.S.A.">
        <title>Genome sequence of the hyperthermophilic crenarchaeon Pyrobaculum aerophilum.</title>
        <authorList>
            <person name="Fitz-Gibbon S.T."/>
            <person name="Ladner H."/>
            <person name="Kim U.-J."/>
            <person name="Stetter K.O."/>
            <person name="Simon M.I."/>
            <person name="Miller J.H."/>
        </authorList>
    </citation>
    <scope>NUCLEOTIDE SEQUENCE [LARGE SCALE GENOMIC DNA]</scope>
    <source>
        <strain>ATCC 51768 / DSM 7523 / JCM 9630 / CIP 104966 / NBRC 100827 / IM2</strain>
    </source>
</reference>
<evidence type="ECO:0000255" key="1">
    <source>
        <dbReference type="HAMAP-Rule" id="MF_00508"/>
    </source>
</evidence>
<evidence type="ECO:0000305" key="2"/>
<accession>Q8ZU80</accession>
<gene>
    <name evidence="1" type="primary">rps10</name>
    <name type="ordered locus">PAE2907</name>
</gene>
<name>RS10_PYRAE</name>
<proteinExistence type="inferred from homology"/>
<organism>
    <name type="scientific">Pyrobaculum aerophilum (strain ATCC 51768 / DSM 7523 / JCM 9630 / CIP 104966 / NBRC 100827 / IM2)</name>
    <dbReference type="NCBI Taxonomy" id="178306"/>
    <lineage>
        <taxon>Archaea</taxon>
        <taxon>Thermoproteota</taxon>
        <taxon>Thermoprotei</taxon>
        <taxon>Thermoproteales</taxon>
        <taxon>Thermoproteaceae</taxon>
        <taxon>Pyrobaculum</taxon>
    </lineage>
</organism>
<keyword id="KW-1185">Reference proteome</keyword>
<keyword id="KW-0687">Ribonucleoprotein</keyword>
<keyword id="KW-0689">Ribosomal protein</keyword>
<protein>
    <recommendedName>
        <fullName evidence="1">Small ribosomal subunit protein uS10</fullName>
    </recommendedName>
    <alternativeName>
        <fullName evidence="2">30S ribosomal protein S10</fullName>
    </alternativeName>
</protein>
<feature type="chain" id="PRO_0000146654" description="Small ribosomal subunit protein uS10">
    <location>
        <begin position="1"/>
        <end position="106"/>
    </location>
</feature>